<keyword id="KW-0560">Oxidoreductase</keyword>
<keyword id="KW-1185">Reference proteome</keyword>
<keyword id="KW-0819">tRNA processing</keyword>
<dbReference type="EC" id="1.14.-.-" evidence="1"/>
<dbReference type="EMBL" id="CP001620">
    <property type="protein sequence ID" value="ACR16947.1"/>
    <property type="molecule type" value="Genomic_DNA"/>
</dbReference>
<dbReference type="RefSeq" id="WP_012730835.1">
    <property type="nucleotide sequence ID" value="NC_012704.1"/>
</dbReference>
<dbReference type="SMR" id="C4LG97"/>
<dbReference type="STRING" id="645127.ckrop_0153"/>
<dbReference type="KEGG" id="ckp:ckrop_0153"/>
<dbReference type="eggNOG" id="COG1054">
    <property type="taxonomic scope" value="Bacteria"/>
</dbReference>
<dbReference type="HOGENOM" id="CLU_038878_1_0_11"/>
<dbReference type="OrthoDB" id="9778326at2"/>
<dbReference type="Proteomes" id="UP000001473">
    <property type="component" value="Chromosome"/>
</dbReference>
<dbReference type="GO" id="GO:0016705">
    <property type="term" value="F:oxidoreductase activity, acting on paired donors, with incorporation or reduction of molecular oxygen"/>
    <property type="evidence" value="ECO:0007669"/>
    <property type="project" value="UniProtKB-UniRule"/>
</dbReference>
<dbReference type="GO" id="GO:0006400">
    <property type="term" value="P:tRNA modification"/>
    <property type="evidence" value="ECO:0007669"/>
    <property type="project" value="UniProtKB-UniRule"/>
</dbReference>
<dbReference type="CDD" id="cd01518">
    <property type="entry name" value="RHOD_YceA"/>
    <property type="match status" value="1"/>
</dbReference>
<dbReference type="Gene3D" id="3.30.70.100">
    <property type="match status" value="1"/>
</dbReference>
<dbReference type="Gene3D" id="3.40.250.10">
    <property type="entry name" value="Rhodanese-like domain"/>
    <property type="match status" value="1"/>
</dbReference>
<dbReference type="HAMAP" id="MF_00469">
    <property type="entry name" value="TrhO"/>
    <property type="match status" value="1"/>
</dbReference>
<dbReference type="InterPro" id="IPR001763">
    <property type="entry name" value="Rhodanese-like_dom"/>
</dbReference>
<dbReference type="InterPro" id="IPR036873">
    <property type="entry name" value="Rhodanese-like_dom_sf"/>
</dbReference>
<dbReference type="InterPro" id="IPR022111">
    <property type="entry name" value="Rhodanese_C"/>
</dbReference>
<dbReference type="InterPro" id="IPR020936">
    <property type="entry name" value="TrhO"/>
</dbReference>
<dbReference type="InterPro" id="IPR040503">
    <property type="entry name" value="TRHO_N"/>
</dbReference>
<dbReference type="NCBIfam" id="NF001134">
    <property type="entry name" value="PRK00142.1-2"/>
    <property type="match status" value="1"/>
</dbReference>
<dbReference type="PANTHER" id="PTHR43268">
    <property type="entry name" value="THIOSULFATE SULFURTRANSFERASE/RHODANESE-LIKE DOMAIN-CONTAINING PROTEIN 2"/>
    <property type="match status" value="1"/>
</dbReference>
<dbReference type="PANTHER" id="PTHR43268:SF6">
    <property type="entry name" value="THIOSULFATE SULFURTRANSFERASE_RHODANESE-LIKE DOMAIN-CONTAINING PROTEIN 2"/>
    <property type="match status" value="1"/>
</dbReference>
<dbReference type="Pfam" id="PF00581">
    <property type="entry name" value="Rhodanese"/>
    <property type="match status" value="1"/>
</dbReference>
<dbReference type="Pfam" id="PF12368">
    <property type="entry name" value="Rhodanese_C"/>
    <property type="match status" value="1"/>
</dbReference>
<dbReference type="Pfam" id="PF17773">
    <property type="entry name" value="UPF0176_N"/>
    <property type="match status" value="1"/>
</dbReference>
<dbReference type="SMART" id="SM00450">
    <property type="entry name" value="RHOD"/>
    <property type="match status" value="1"/>
</dbReference>
<dbReference type="SUPFAM" id="SSF52821">
    <property type="entry name" value="Rhodanese/Cell cycle control phosphatase"/>
    <property type="match status" value="1"/>
</dbReference>
<dbReference type="PROSITE" id="PS50206">
    <property type="entry name" value="RHODANESE_3"/>
    <property type="match status" value="1"/>
</dbReference>
<evidence type="ECO:0000255" key="1">
    <source>
        <dbReference type="HAMAP-Rule" id="MF_00469"/>
    </source>
</evidence>
<gene>
    <name evidence="1" type="primary">trhO</name>
    <name type="ordered locus">ckrop_0153</name>
</gene>
<accession>C4LG97</accession>
<organism>
    <name type="scientific">Corynebacterium kroppenstedtii (strain DSM 44385 / JCM 11950 / CIP 105744 / CCUG 35717)</name>
    <dbReference type="NCBI Taxonomy" id="645127"/>
    <lineage>
        <taxon>Bacteria</taxon>
        <taxon>Bacillati</taxon>
        <taxon>Actinomycetota</taxon>
        <taxon>Actinomycetes</taxon>
        <taxon>Mycobacteriales</taxon>
        <taxon>Corynebacteriaceae</taxon>
        <taxon>Corynebacterium</taxon>
    </lineage>
</organism>
<proteinExistence type="inferred from homology"/>
<reference key="1">
    <citation type="journal article" date="2008" name="J. Biotechnol.">
        <title>Ultrafast pyrosequencing of Corynebacterium kroppenstedtii DSM44385 revealed insights into the physiology of a lipophilic corynebacterium that lacks mycolic acids.</title>
        <authorList>
            <person name="Tauch A."/>
            <person name="Schneider J."/>
            <person name="Szczepanowski R."/>
            <person name="Tilker A."/>
            <person name="Viehoever P."/>
            <person name="Gartemann K.-H."/>
            <person name="Arnold W."/>
            <person name="Blom J."/>
            <person name="Brinkrolf K."/>
            <person name="Brune I."/>
            <person name="Goetker S."/>
            <person name="Weisshaar B."/>
            <person name="Goesmann A."/>
            <person name="Droege M."/>
            <person name="Puehler A."/>
        </authorList>
    </citation>
    <scope>NUCLEOTIDE SEQUENCE [LARGE SCALE GENOMIC DNA]</scope>
    <source>
        <strain>DSM 44385 / JCM 11950 / CIP 105744 / CCUG 35717</strain>
    </source>
</reference>
<feature type="chain" id="PRO_1000206334" description="tRNA uridine(34) hydroxylase">
    <location>
        <begin position="1"/>
        <end position="296"/>
    </location>
</feature>
<feature type="domain" description="Rhodanese" evidence="1">
    <location>
        <begin position="130"/>
        <end position="225"/>
    </location>
</feature>
<feature type="active site" description="Cysteine persulfide intermediate" evidence="1">
    <location>
        <position position="185"/>
    </location>
</feature>
<name>TRHO_CORK4</name>
<sequence>MSMPKIVLFYVFTPLADPEAIRLWQKALAEKWNLKGRVIISKDGINATLGGELNDVKRYCRETRSYAPFKNADIKWSEGEGDDFPRLSVKVRPELVTFGAGDELKVNEEGVIGGGTHLKPEDLHHLMDERGDDVVFFDGRNAMEAEIGKFRNAVVPNTTTTRDFLNEIESGKYDDLKKRPVVTYCTGGIRCEVLSVLMKNRGFEEVYQLDGGIVRYGEAYGNDGYWDGSLYVFDKRMHMEFGSGTESLGHCVECGKPTAQFVNCANNDCRKLFLRCDECTAAHKHQYCGECEPALV</sequence>
<protein>
    <recommendedName>
        <fullName evidence="1">tRNA uridine(34) hydroxylase</fullName>
        <ecNumber evidence="1">1.14.-.-</ecNumber>
    </recommendedName>
    <alternativeName>
        <fullName evidence="1">tRNA hydroxylation protein O</fullName>
    </alternativeName>
</protein>
<comment type="function">
    <text evidence="1">Catalyzes oxygen-dependent 5-hydroxyuridine (ho5U) modification at position 34 in tRNAs.</text>
</comment>
<comment type="catalytic activity">
    <reaction evidence="1">
        <text>uridine(34) in tRNA + AH2 + O2 = 5-hydroxyuridine(34) in tRNA + A + H2O</text>
        <dbReference type="Rhea" id="RHEA:64224"/>
        <dbReference type="Rhea" id="RHEA-COMP:11727"/>
        <dbReference type="Rhea" id="RHEA-COMP:13381"/>
        <dbReference type="ChEBI" id="CHEBI:13193"/>
        <dbReference type="ChEBI" id="CHEBI:15377"/>
        <dbReference type="ChEBI" id="CHEBI:15379"/>
        <dbReference type="ChEBI" id="CHEBI:17499"/>
        <dbReference type="ChEBI" id="CHEBI:65315"/>
        <dbReference type="ChEBI" id="CHEBI:136877"/>
    </reaction>
</comment>
<comment type="similarity">
    <text evidence="1">Belongs to the TrhO family.</text>
</comment>